<name>SECB_ECODH</name>
<proteinExistence type="inferred from homology"/>
<organism>
    <name type="scientific">Escherichia coli (strain K12 / DH10B)</name>
    <dbReference type="NCBI Taxonomy" id="316385"/>
    <lineage>
        <taxon>Bacteria</taxon>
        <taxon>Pseudomonadati</taxon>
        <taxon>Pseudomonadota</taxon>
        <taxon>Gammaproteobacteria</taxon>
        <taxon>Enterobacterales</taxon>
        <taxon>Enterobacteriaceae</taxon>
        <taxon>Escherichia</taxon>
    </lineage>
</organism>
<comment type="function">
    <text evidence="1">One of the proteins required for the normal export of preproteins out of the cell cytoplasm. It is a molecular chaperone that binds to a subset of precursor proteins, maintaining them in a translocation-competent state. It also specifically binds to its receptor SecA.</text>
</comment>
<comment type="subunit">
    <text evidence="1">Homotetramer, a dimer of dimers. One homotetramer interacts with 1 SecA dimer.</text>
</comment>
<comment type="subcellular location">
    <subcellularLocation>
        <location evidence="1">Cytoplasm</location>
    </subcellularLocation>
</comment>
<comment type="similarity">
    <text evidence="1">Belongs to the SecB family.</text>
</comment>
<accession>B1X943</accession>
<dbReference type="EMBL" id="CP000948">
    <property type="protein sequence ID" value="ACB04659.1"/>
    <property type="molecule type" value="Genomic_DNA"/>
</dbReference>
<dbReference type="RefSeq" id="WP_000003377.1">
    <property type="nucleotide sequence ID" value="NC_010473.1"/>
</dbReference>
<dbReference type="SMR" id="B1X943"/>
<dbReference type="GeneID" id="86944403"/>
<dbReference type="KEGG" id="ecd:ECDH10B_3791"/>
<dbReference type="HOGENOM" id="CLU_111574_1_0_6"/>
<dbReference type="GO" id="GO:0005737">
    <property type="term" value="C:cytoplasm"/>
    <property type="evidence" value="ECO:0007669"/>
    <property type="project" value="UniProtKB-SubCell"/>
</dbReference>
<dbReference type="GO" id="GO:0051082">
    <property type="term" value="F:unfolded protein binding"/>
    <property type="evidence" value="ECO:0007669"/>
    <property type="project" value="InterPro"/>
</dbReference>
<dbReference type="GO" id="GO:0006457">
    <property type="term" value="P:protein folding"/>
    <property type="evidence" value="ECO:0007669"/>
    <property type="project" value="UniProtKB-UniRule"/>
</dbReference>
<dbReference type="GO" id="GO:0051262">
    <property type="term" value="P:protein tetramerization"/>
    <property type="evidence" value="ECO:0007669"/>
    <property type="project" value="InterPro"/>
</dbReference>
<dbReference type="GO" id="GO:0015031">
    <property type="term" value="P:protein transport"/>
    <property type="evidence" value="ECO:0007669"/>
    <property type="project" value="UniProtKB-UniRule"/>
</dbReference>
<dbReference type="CDD" id="cd00557">
    <property type="entry name" value="Translocase_SecB"/>
    <property type="match status" value="1"/>
</dbReference>
<dbReference type="FunFam" id="3.10.420.10:FF:000001">
    <property type="entry name" value="Protein-export chaperone SecB"/>
    <property type="match status" value="1"/>
</dbReference>
<dbReference type="Gene3D" id="3.10.420.10">
    <property type="entry name" value="SecB-like"/>
    <property type="match status" value="1"/>
</dbReference>
<dbReference type="HAMAP" id="MF_00821">
    <property type="entry name" value="SecB"/>
    <property type="match status" value="1"/>
</dbReference>
<dbReference type="InterPro" id="IPR003708">
    <property type="entry name" value="SecB"/>
</dbReference>
<dbReference type="InterPro" id="IPR035958">
    <property type="entry name" value="SecB-like_sf"/>
</dbReference>
<dbReference type="NCBIfam" id="NF004390">
    <property type="entry name" value="PRK05751.1-1"/>
    <property type="match status" value="1"/>
</dbReference>
<dbReference type="NCBIfam" id="NF004393">
    <property type="entry name" value="PRK05751.1-4"/>
    <property type="match status" value="1"/>
</dbReference>
<dbReference type="NCBIfam" id="TIGR00809">
    <property type="entry name" value="secB"/>
    <property type="match status" value="1"/>
</dbReference>
<dbReference type="PANTHER" id="PTHR36918">
    <property type="match status" value="1"/>
</dbReference>
<dbReference type="PANTHER" id="PTHR36918:SF1">
    <property type="entry name" value="PROTEIN-EXPORT PROTEIN SECB"/>
    <property type="match status" value="1"/>
</dbReference>
<dbReference type="Pfam" id="PF02556">
    <property type="entry name" value="SecB"/>
    <property type="match status" value="1"/>
</dbReference>
<dbReference type="PRINTS" id="PR01594">
    <property type="entry name" value="SECBCHAPRONE"/>
</dbReference>
<dbReference type="SUPFAM" id="SSF54611">
    <property type="entry name" value="SecB-like"/>
    <property type="match status" value="1"/>
</dbReference>
<reference key="1">
    <citation type="journal article" date="2008" name="J. Bacteriol.">
        <title>The complete genome sequence of Escherichia coli DH10B: insights into the biology of a laboratory workhorse.</title>
        <authorList>
            <person name="Durfee T."/>
            <person name="Nelson R."/>
            <person name="Baldwin S."/>
            <person name="Plunkett G. III"/>
            <person name="Burland V."/>
            <person name="Mau B."/>
            <person name="Petrosino J.F."/>
            <person name="Qin X."/>
            <person name="Muzny D.M."/>
            <person name="Ayele M."/>
            <person name="Gibbs R.A."/>
            <person name="Csorgo B."/>
            <person name="Posfai G."/>
            <person name="Weinstock G.M."/>
            <person name="Blattner F.R."/>
        </authorList>
    </citation>
    <scope>NUCLEOTIDE SEQUENCE [LARGE SCALE GENOMIC DNA]</scope>
    <source>
        <strain>K12 / DH10B</strain>
    </source>
</reference>
<sequence length="155" mass="17277">MSEQNNTEMTFQIQRIYTKDISFEAPNAPHVFQKDWQPEVKLDLDTASSQLADDVYEVVLRVTVTASLGEETAFLCEVQQGGIFSIAGIEGTQMAHCLGAYCPNILFPYARECITSMVSRGTFPQLNLAPVNFDALFMNYLQQQAGEGTEEHQDA</sequence>
<keyword id="KW-0143">Chaperone</keyword>
<keyword id="KW-0963">Cytoplasm</keyword>
<keyword id="KW-0653">Protein transport</keyword>
<keyword id="KW-0811">Translocation</keyword>
<keyword id="KW-0813">Transport</keyword>
<feature type="chain" id="PRO_1000195317" description="Protein-export protein SecB">
    <location>
        <begin position="1"/>
        <end position="155"/>
    </location>
</feature>
<gene>
    <name evidence="1" type="primary">secB</name>
    <name type="ordered locus">ECDH10B_3791</name>
</gene>
<protein>
    <recommendedName>
        <fullName evidence="1">Protein-export protein SecB</fullName>
    </recommendedName>
</protein>
<evidence type="ECO:0000255" key="1">
    <source>
        <dbReference type="HAMAP-Rule" id="MF_00821"/>
    </source>
</evidence>